<comment type="function">
    <text evidence="1">Catalyzes the insertion of one atom of molecular oxygen into position 2 of the phenyl ring of 3-(3-hydroxyphenyl)propionate (3-HPP) and hydroxycinnamic acid (3HCI).</text>
</comment>
<comment type="catalytic activity">
    <reaction evidence="1">
        <text>3-(3-hydroxyphenyl)propanoate + NADH + O2 + H(+) = 3-(2,3-dihydroxyphenyl)propanoate + NAD(+) + H2O</text>
        <dbReference type="Rhea" id="RHEA:24785"/>
        <dbReference type="ChEBI" id="CHEBI:15377"/>
        <dbReference type="ChEBI" id="CHEBI:15378"/>
        <dbReference type="ChEBI" id="CHEBI:15379"/>
        <dbReference type="ChEBI" id="CHEBI:46951"/>
        <dbReference type="ChEBI" id="CHEBI:57277"/>
        <dbReference type="ChEBI" id="CHEBI:57540"/>
        <dbReference type="ChEBI" id="CHEBI:57945"/>
        <dbReference type="EC" id="1.14.13.127"/>
    </reaction>
</comment>
<comment type="catalytic activity">
    <reaction evidence="1">
        <text>(2E)-3-(3-hydroxyphenyl)prop-2-enoate + NADH + O2 + H(+) = (2E)-3-(2,3-dihydroxyphenyl)prop-2-enoate + NAD(+) + H2O</text>
        <dbReference type="Rhea" id="RHEA:27846"/>
        <dbReference type="ChEBI" id="CHEBI:15377"/>
        <dbReference type="ChEBI" id="CHEBI:15378"/>
        <dbReference type="ChEBI" id="CHEBI:15379"/>
        <dbReference type="ChEBI" id="CHEBI:47928"/>
        <dbReference type="ChEBI" id="CHEBI:57540"/>
        <dbReference type="ChEBI" id="CHEBI:57945"/>
        <dbReference type="ChEBI" id="CHEBI:58642"/>
        <dbReference type="EC" id="1.14.13.127"/>
    </reaction>
</comment>
<comment type="cofactor">
    <cofactor evidence="1">
        <name>FAD</name>
        <dbReference type="ChEBI" id="CHEBI:57692"/>
    </cofactor>
</comment>
<comment type="pathway">
    <text evidence="1">Aromatic compound metabolism; 3-phenylpropanoate degradation.</text>
</comment>
<comment type="similarity">
    <text evidence="1">Belongs to the PheA/TfdB FAD monooxygenase family.</text>
</comment>
<name>MHPA_ECO24</name>
<evidence type="ECO:0000255" key="1">
    <source>
        <dbReference type="HAMAP-Rule" id="MF_01652"/>
    </source>
</evidence>
<proteinExistence type="inferred from homology"/>
<dbReference type="EC" id="1.14.13.127" evidence="1"/>
<dbReference type="EMBL" id="CP000800">
    <property type="protein sequence ID" value="ABV20772.1"/>
    <property type="molecule type" value="Genomic_DNA"/>
</dbReference>
<dbReference type="RefSeq" id="WP_001007446.1">
    <property type="nucleotide sequence ID" value="NC_009801.1"/>
</dbReference>
<dbReference type="SMR" id="A7ZI94"/>
<dbReference type="KEGG" id="ecw:EcE24377A_0371"/>
<dbReference type="HOGENOM" id="CLU_009665_20_2_6"/>
<dbReference type="UniPathway" id="UPA00714"/>
<dbReference type="Proteomes" id="UP000001122">
    <property type="component" value="Chromosome"/>
</dbReference>
<dbReference type="GO" id="GO:0008688">
    <property type="term" value="F:3-(3-hydroxyphenyl)propionate hydroxylase activity"/>
    <property type="evidence" value="ECO:0007669"/>
    <property type="project" value="UniProtKB-UniRule"/>
</dbReference>
<dbReference type="GO" id="GO:0071949">
    <property type="term" value="F:FAD binding"/>
    <property type="evidence" value="ECO:0007669"/>
    <property type="project" value="InterPro"/>
</dbReference>
<dbReference type="GO" id="GO:0019622">
    <property type="term" value="P:3-(3-hydroxy)phenylpropionate catabolic process"/>
    <property type="evidence" value="ECO:0007669"/>
    <property type="project" value="UniProtKB-UniRule"/>
</dbReference>
<dbReference type="GO" id="GO:0019380">
    <property type="term" value="P:3-phenylpropionate catabolic process"/>
    <property type="evidence" value="ECO:0007669"/>
    <property type="project" value="UniProtKB-UniPathway"/>
</dbReference>
<dbReference type="FunFam" id="3.30.70.2450:FF:000001">
    <property type="entry name" value="3-(3-hydroxy-phenyl)propionate/3-hydroxycinnamic acid hydroxylase"/>
    <property type="match status" value="1"/>
</dbReference>
<dbReference type="FunFam" id="3.50.50.60:FF:000126">
    <property type="entry name" value="3-(3-hydroxy-phenyl)propionate/3-hydroxycinnamic acid hydroxylase"/>
    <property type="match status" value="1"/>
</dbReference>
<dbReference type="Gene3D" id="3.30.70.2450">
    <property type="match status" value="1"/>
</dbReference>
<dbReference type="Gene3D" id="3.50.50.60">
    <property type="entry name" value="FAD/NAD(P)-binding domain"/>
    <property type="match status" value="1"/>
</dbReference>
<dbReference type="HAMAP" id="MF_01652">
    <property type="entry name" value="MhpA"/>
    <property type="match status" value="1"/>
</dbReference>
<dbReference type="InterPro" id="IPR023786">
    <property type="entry name" value="3-HPP/3HCI_hydroxylase"/>
</dbReference>
<dbReference type="InterPro" id="IPR002938">
    <property type="entry name" value="FAD-bd"/>
</dbReference>
<dbReference type="InterPro" id="IPR036188">
    <property type="entry name" value="FAD/NAD-bd_sf"/>
</dbReference>
<dbReference type="InterPro" id="IPR050631">
    <property type="entry name" value="PheA/TfdB_FAD_monoxygenase"/>
</dbReference>
<dbReference type="NCBIfam" id="NF004827">
    <property type="entry name" value="PRK06183.1-1"/>
    <property type="match status" value="1"/>
</dbReference>
<dbReference type="NCBIfam" id="NF004829">
    <property type="entry name" value="PRK06183.1-3"/>
    <property type="match status" value="1"/>
</dbReference>
<dbReference type="NCBIfam" id="NF004831">
    <property type="entry name" value="PRK06183.1-5"/>
    <property type="match status" value="1"/>
</dbReference>
<dbReference type="PANTHER" id="PTHR43476">
    <property type="entry name" value="3-(3-HYDROXY-PHENYL)PROPIONATE/3-HYDROXYCINNAMIC ACID HYDROXYLASE"/>
    <property type="match status" value="1"/>
</dbReference>
<dbReference type="PANTHER" id="PTHR43476:SF3">
    <property type="entry name" value="FAD-BINDING MONOOXYGENASE"/>
    <property type="match status" value="1"/>
</dbReference>
<dbReference type="Pfam" id="PF01494">
    <property type="entry name" value="FAD_binding_3"/>
    <property type="match status" value="1"/>
</dbReference>
<dbReference type="PRINTS" id="PR00420">
    <property type="entry name" value="RNGMNOXGNASE"/>
</dbReference>
<dbReference type="SUPFAM" id="SSF51905">
    <property type="entry name" value="FAD/NAD(P)-binding domain"/>
    <property type="match status" value="1"/>
</dbReference>
<sequence length="554" mass="62184">MAIQHPDIQPAVNHSVQVAIAGAGPVGLMMANYLGQMGIDVLVVEKLDKLIDYPRAIGIDDEALRTMQSVGLVENVLPHTTPWHAMRFLTPKGRCFADIQPMTDEFGWPRRNAFIQPQVDAVMLEGLSRFPNVRCLFARELEAFSQQNDEVTLHLKTAEGQRETVKAQWLVACDGGASFVRRTLNVPFEGKTAPNQWIVVDIANDPLSTPHIYLCCDPVRPYVSAALPHAVRRFEFMVMPGETEEQLREPQNMRKLLSKVLPNPDNVELIRQRVYTHNARLAQRFRIDRVLLAGDAAHIMPVWQGQGYNSGMRDAFNLAWKLALVIQGKARDALLDTYQQERRDHAKAMIDLSVTAGNVLAPPKRWQGTLRDGVSWLLNYLPPVKRYFLEMRFKPMPQYYGGALMREGEAKHSPVGKMFIQPKVTLENGDVTLLDNAIGANFAVIGWGCNPLWGMSDEQIQQWRALGTRFIQVVPEVQIHTAQDNHDGVLRVGDTQGRLRSWFAQHNASLVVMRPDRFVAATAIPQTLGKTLNKLASVMTLTRPDADVSVEKVA</sequence>
<accession>A7ZI94</accession>
<reference key="1">
    <citation type="journal article" date="2008" name="J. Bacteriol.">
        <title>The pangenome structure of Escherichia coli: comparative genomic analysis of E. coli commensal and pathogenic isolates.</title>
        <authorList>
            <person name="Rasko D.A."/>
            <person name="Rosovitz M.J."/>
            <person name="Myers G.S.A."/>
            <person name="Mongodin E.F."/>
            <person name="Fricke W.F."/>
            <person name="Gajer P."/>
            <person name="Crabtree J."/>
            <person name="Sebaihia M."/>
            <person name="Thomson N.R."/>
            <person name="Chaudhuri R."/>
            <person name="Henderson I.R."/>
            <person name="Sperandio V."/>
            <person name="Ravel J."/>
        </authorList>
    </citation>
    <scope>NUCLEOTIDE SEQUENCE [LARGE SCALE GENOMIC DNA]</scope>
    <source>
        <strain>E24377A / ETEC</strain>
    </source>
</reference>
<keyword id="KW-0058">Aromatic hydrocarbons catabolism</keyword>
<keyword id="KW-0274">FAD</keyword>
<keyword id="KW-0285">Flavoprotein</keyword>
<keyword id="KW-0520">NAD</keyword>
<keyword id="KW-0560">Oxidoreductase</keyword>
<keyword id="KW-1185">Reference proteome</keyword>
<feature type="chain" id="PRO_0000337630" description="3-(3-hydroxy-phenyl)propionate/3-hydroxycinnamic acid hydroxylase">
    <location>
        <begin position="1"/>
        <end position="554"/>
    </location>
</feature>
<feature type="binding site" evidence="1">
    <location>
        <begin position="17"/>
        <end position="46"/>
    </location>
    <ligand>
        <name>FAD</name>
        <dbReference type="ChEBI" id="CHEBI:57692"/>
    </ligand>
</feature>
<feature type="binding site" evidence="1">
    <location>
        <begin position="285"/>
        <end position="295"/>
    </location>
    <ligand>
        <name>FAD</name>
        <dbReference type="ChEBI" id="CHEBI:57692"/>
    </ligand>
</feature>
<organism>
    <name type="scientific">Escherichia coli O139:H28 (strain E24377A / ETEC)</name>
    <dbReference type="NCBI Taxonomy" id="331111"/>
    <lineage>
        <taxon>Bacteria</taxon>
        <taxon>Pseudomonadati</taxon>
        <taxon>Pseudomonadota</taxon>
        <taxon>Gammaproteobacteria</taxon>
        <taxon>Enterobacterales</taxon>
        <taxon>Enterobacteriaceae</taxon>
        <taxon>Escherichia</taxon>
    </lineage>
</organism>
<protein>
    <recommendedName>
        <fullName evidence="1">3-(3-hydroxy-phenyl)propionate/3-hydroxycinnamic acid hydroxylase</fullName>
        <shortName evidence="1">3-HCI hydroxylase</shortName>
        <shortName evidence="1">3-HPP hydroxylase</shortName>
        <ecNumber evidence="1">1.14.13.127</ecNumber>
    </recommendedName>
</protein>
<gene>
    <name evidence="1" type="primary">mhpA</name>
    <name type="ordered locus">EcE24377A_0371</name>
</gene>